<sequence>MAVISKKIPAPDKVEIKTALLSVFDKTGIVELAQALSERGVRLLSTGGTYKAIATAGLAVTDVSDITGFPEIMDGRVKTLHPTVHGGLLAIRDDSEHQEAMKKHGIEGIDLAVINLYPFEEVRAAGGDYPTTVENIDIGGPAMIRASAKNHAYVTILTDPNDYAEFKEQLSADAGKTAYAFRQRMAAKAYARTAAYDAAISNWFAEALSIDAPRHRVIGGVLKEEMRYGENPHQKAAFYVTGEKRPGVSTAVLLQGKQLSYNNINDTDAAYELVAEFLPEKAPACAIIKHANPCGVATGSSLVEAYRRALACDSVSAFGGIIALNQILDAETAEEIVKLFTEVIIAPDVTEEAKAIVVRKPNLRLLSAGGLPDPRVAGLTAKTVSGGLLVQSRDNGMVEDLELKVVTKRAPTSQELEDMKFAFKVGKHVKSNAVVYAKDGQTAGIGAGQMSRVDSARIAALKAEEAAKALGLAVPMTKGSAVASEAFLPFADGLLSMIAAGATAVIQPGGSMRDQEVIDAANEHGIAMVFTGMRHFRH</sequence>
<evidence type="ECO:0000255" key="1">
    <source>
        <dbReference type="HAMAP-Rule" id="MF_00139"/>
    </source>
</evidence>
<evidence type="ECO:0000255" key="2">
    <source>
        <dbReference type="PROSITE-ProRule" id="PRU01202"/>
    </source>
</evidence>
<comment type="catalytic activity">
    <reaction evidence="1">
        <text>(6R)-10-formyltetrahydrofolate + 5-amino-1-(5-phospho-beta-D-ribosyl)imidazole-4-carboxamide = 5-formamido-1-(5-phospho-D-ribosyl)imidazole-4-carboxamide + (6S)-5,6,7,8-tetrahydrofolate</text>
        <dbReference type="Rhea" id="RHEA:22192"/>
        <dbReference type="ChEBI" id="CHEBI:57453"/>
        <dbReference type="ChEBI" id="CHEBI:58467"/>
        <dbReference type="ChEBI" id="CHEBI:58475"/>
        <dbReference type="ChEBI" id="CHEBI:195366"/>
        <dbReference type="EC" id="2.1.2.3"/>
    </reaction>
</comment>
<comment type="catalytic activity">
    <reaction evidence="1">
        <text>IMP + H2O = 5-formamido-1-(5-phospho-D-ribosyl)imidazole-4-carboxamide</text>
        <dbReference type="Rhea" id="RHEA:18445"/>
        <dbReference type="ChEBI" id="CHEBI:15377"/>
        <dbReference type="ChEBI" id="CHEBI:58053"/>
        <dbReference type="ChEBI" id="CHEBI:58467"/>
        <dbReference type="EC" id="3.5.4.10"/>
    </reaction>
</comment>
<comment type="pathway">
    <text evidence="1">Purine metabolism; IMP biosynthesis via de novo pathway; 5-formamido-1-(5-phospho-D-ribosyl)imidazole-4-carboxamide from 5-amino-1-(5-phospho-D-ribosyl)imidazole-4-carboxamide (10-formyl THF route): step 1/1.</text>
</comment>
<comment type="pathway">
    <text evidence="1">Purine metabolism; IMP biosynthesis via de novo pathway; IMP from 5-formamido-1-(5-phospho-D-ribosyl)imidazole-4-carboxamide: step 1/1.</text>
</comment>
<comment type="domain">
    <text evidence="1">The IMP cyclohydrolase activity resides in the N-terminal region.</text>
</comment>
<comment type="similarity">
    <text evidence="1">Belongs to the PurH family.</text>
</comment>
<accession>B3PS36</accession>
<reference key="1">
    <citation type="journal article" date="2010" name="Appl. Environ. Microbiol.">
        <title>Conserved symbiotic plasmid DNA sequences in the multireplicon pangenomic structure of Rhizobium etli.</title>
        <authorList>
            <person name="Gonzalez V."/>
            <person name="Acosta J.L."/>
            <person name="Santamaria R.I."/>
            <person name="Bustos P."/>
            <person name="Fernandez J.L."/>
            <person name="Hernandez Gonzalez I.L."/>
            <person name="Diaz R."/>
            <person name="Flores M."/>
            <person name="Palacios R."/>
            <person name="Mora J."/>
            <person name="Davila G."/>
        </authorList>
    </citation>
    <scope>NUCLEOTIDE SEQUENCE [LARGE SCALE GENOMIC DNA]</scope>
    <source>
        <strain>CIAT 652</strain>
    </source>
</reference>
<dbReference type="EC" id="2.1.2.3" evidence="1"/>
<dbReference type="EC" id="3.5.4.10" evidence="1"/>
<dbReference type="EMBL" id="CP001074">
    <property type="protein sequence ID" value="ACE93326.1"/>
    <property type="molecule type" value="Genomic_DNA"/>
</dbReference>
<dbReference type="SMR" id="B3PS36"/>
<dbReference type="KEGG" id="rec:RHECIAT_CH0004399"/>
<dbReference type="eggNOG" id="COG0138">
    <property type="taxonomic scope" value="Bacteria"/>
</dbReference>
<dbReference type="HOGENOM" id="CLU_016316_5_2_5"/>
<dbReference type="UniPathway" id="UPA00074">
    <property type="reaction ID" value="UER00133"/>
</dbReference>
<dbReference type="UniPathway" id="UPA00074">
    <property type="reaction ID" value="UER00135"/>
</dbReference>
<dbReference type="Proteomes" id="UP000008817">
    <property type="component" value="Chromosome"/>
</dbReference>
<dbReference type="GO" id="GO:0005829">
    <property type="term" value="C:cytosol"/>
    <property type="evidence" value="ECO:0007669"/>
    <property type="project" value="TreeGrafter"/>
</dbReference>
<dbReference type="GO" id="GO:0003937">
    <property type="term" value="F:IMP cyclohydrolase activity"/>
    <property type="evidence" value="ECO:0007669"/>
    <property type="project" value="UniProtKB-UniRule"/>
</dbReference>
<dbReference type="GO" id="GO:0004643">
    <property type="term" value="F:phosphoribosylaminoimidazolecarboxamide formyltransferase activity"/>
    <property type="evidence" value="ECO:0007669"/>
    <property type="project" value="UniProtKB-UniRule"/>
</dbReference>
<dbReference type="GO" id="GO:0006189">
    <property type="term" value="P:'de novo' IMP biosynthetic process"/>
    <property type="evidence" value="ECO:0007669"/>
    <property type="project" value="UniProtKB-UniRule"/>
</dbReference>
<dbReference type="CDD" id="cd01421">
    <property type="entry name" value="IMPCH"/>
    <property type="match status" value="1"/>
</dbReference>
<dbReference type="FunFam" id="3.40.140.20:FF:000001">
    <property type="entry name" value="Bifunctional purine biosynthesis protein PurH"/>
    <property type="match status" value="1"/>
</dbReference>
<dbReference type="FunFam" id="3.40.140.20:FF:000002">
    <property type="entry name" value="Bifunctional purine biosynthesis protein PurH"/>
    <property type="match status" value="1"/>
</dbReference>
<dbReference type="FunFam" id="3.40.50.1380:FF:000001">
    <property type="entry name" value="Bifunctional purine biosynthesis protein PurH"/>
    <property type="match status" value="1"/>
</dbReference>
<dbReference type="Gene3D" id="3.40.140.20">
    <property type="match status" value="2"/>
</dbReference>
<dbReference type="Gene3D" id="3.40.50.1380">
    <property type="entry name" value="Methylglyoxal synthase-like domain"/>
    <property type="match status" value="1"/>
</dbReference>
<dbReference type="HAMAP" id="MF_00139">
    <property type="entry name" value="PurH"/>
    <property type="match status" value="1"/>
</dbReference>
<dbReference type="InterPro" id="IPR024051">
    <property type="entry name" value="AICAR_Tfase_dup_dom_sf"/>
</dbReference>
<dbReference type="InterPro" id="IPR016193">
    <property type="entry name" value="Cytidine_deaminase-like"/>
</dbReference>
<dbReference type="InterPro" id="IPR011607">
    <property type="entry name" value="MGS-like_dom"/>
</dbReference>
<dbReference type="InterPro" id="IPR036914">
    <property type="entry name" value="MGS-like_dom_sf"/>
</dbReference>
<dbReference type="InterPro" id="IPR002695">
    <property type="entry name" value="PurH-like"/>
</dbReference>
<dbReference type="NCBIfam" id="NF002049">
    <property type="entry name" value="PRK00881.1"/>
    <property type="match status" value="1"/>
</dbReference>
<dbReference type="NCBIfam" id="TIGR00355">
    <property type="entry name" value="purH"/>
    <property type="match status" value="1"/>
</dbReference>
<dbReference type="PANTHER" id="PTHR11692:SF0">
    <property type="entry name" value="BIFUNCTIONAL PURINE BIOSYNTHESIS PROTEIN ATIC"/>
    <property type="match status" value="1"/>
</dbReference>
<dbReference type="PANTHER" id="PTHR11692">
    <property type="entry name" value="BIFUNCTIONAL PURINE BIOSYNTHESIS PROTEIN PURH"/>
    <property type="match status" value="1"/>
</dbReference>
<dbReference type="Pfam" id="PF01808">
    <property type="entry name" value="AICARFT_IMPCHas"/>
    <property type="match status" value="1"/>
</dbReference>
<dbReference type="Pfam" id="PF02142">
    <property type="entry name" value="MGS"/>
    <property type="match status" value="1"/>
</dbReference>
<dbReference type="PIRSF" id="PIRSF000414">
    <property type="entry name" value="AICARFT_IMPCHas"/>
    <property type="match status" value="1"/>
</dbReference>
<dbReference type="SMART" id="SM00798">
    <property type="entry name" value="AICARFT_IMPCHas"/>
    <property type="match status" value="1"/>
</dbReference>
<dbReference type="SMART" id="SM00851">
    <property type="entry name" value="MGS"/>
    <property type="match status" value="1"/>
</dbReference>
<dbReference type="SUPFAM" id="SSF53927">
    <property type="entry name" value="Cytidine deaminase-like"/>
    <property type="match status" value="1"/>
</dbReference>
<dbReference type="SUPFAM" id="SSF52335">
    <property type="entry name" value="Methylglyoxal synthase-like"/>
    <property type="match status" value="1"/>
</dbReference>
<dbReference type="PROSITE" id="PS51855">
    <property type="entry name" value="MGS"/>
    <property type="match status" value="1"/>
</dbReference>
<keyword id="KW-0378">Hydrolase</keyword>
<keyword id="KW-0511">Multifunctional enzyme</keyword>
<keyword id="KW-0658">Purine biosynthesis</keyword>
<keyword id="KW-0808">Transferase</keyword>
<proteinExistence type="inferred from homology"/>
<name>PUR9_RHIE6</name>
<organism>
    <name type="scientific">Rhizobium etli (strain CIAT 652)</name>
    <dbReference type="NCBI Taxonomy" id="491916"/>
    <lineage>
        <taxon>Bacteria</taxon>
        <taxon>Pseudomonadati</taxon>
        <taxon>Pseudomonadota</taxon>
        <taxon>Alphaproteobacteria</taxon>
        <taxon>Hyphomicrobiales</taxon>
        <taxon>Rhizobiaceae</taxon>
        <taxon>Rhizobium/Agrobacterium group</taxon>
        <taxon>Rhizobium</taxon>
    </lineage>
</organism>
<protein>
    <recommendedName>
        <fullName evidence="1">Bifunctional purine biosynthesis protein PurH</fullName>
    </recommendedName>
    <domain>
        <recommendedName>
            <fullName evidence="1">Phosphoribosylaminoimidazolecarboxamide formyltransferase</fullName>
            <ecNumber evidence="1">2.1.2.3</ecNumber>
        </recommendedName>
        <alternativeName>
            <fullName evidence="1">AICAR transformylase</fullName>
        </alternativeName>
    </domain>
    <domain>
        <recommendedName>
            <fullName evidence="1">IMP cyclohydrolase</fullName>
            <ecNumber evidence="1">3.5.4.10</ecNumber>
        </recommendedName>
        <alternativeName>
            <fullName evidence="1">ATIC</fullName>
        </alternativeName>
        <alternativeName>
            <fullName evidence="1">IMP synthase</fullName>
        </alternativeName>
        <alternativeName>
            <fullName evidence="1">Inosinicase</fullName>
        </alternativeName>
    </domain>
</protein>
<feature type="chain" id="PRO_1000096086" description="Bifunctional purine biosynthesis protein PurH">
    <location>
        <begin position="1"/>
        <end position="538"/>
    </location>
</feature>
<feature type="domain" description="MGS-like" evidence="2">
    <location>
        <begin position="8"/>
        <end position="158"/>
    </location>
</feature>
<gene>
    <name evidence="1" type="primary">purH</name>
    <name type="ordered locus">RHECIAT_CH0004399</name>
</gene>